<dbReference type="EC" id="3.2.2.23"/>
<dbReference type="EC" id="4.2.99.18"/>
<dbReference type="EMBL" id="AE004439">
    <property type="protein sequence ID" value="AAK03229.1"/>
    <property type="molecule type" value="Genomic_DNA"/>
</dbReference>
<dbReference type="RefSeq" id="WP_010907042.1">
    <property type="nucleotide sequence ID" value="NC_002663.1"/>
</dbReference>
<dbReference type="SMR" id="P57910"/>
<dbReference type="STRING" id="272843.PM1145"/>
<dbReference type="EnsemblBacteria" id="AAK03229">
    <property type="protein sequence ID" value="AAK03229"/>
    <property type="gene ID" value="PM1145"/>
</dbReference>
<dbReference type="KEGG" id="pmu:PM1145"/>
<dbReference type="PATRIC" id="fig|272843.6.peg.1156"/>
<dbReference type="HOGENOM" id="CLU_038423_1_1_6"/>
<dbReference type="OrthoDB" id="9800855at2"/>
<dbReference type="Proteomes" id="UP000000809">
    <property type="component" value="Chromosome"/>
</dbReference>
<dbReference type="GO" id="GO:0034039">
    <property type="term" value="F:8-oxo-7,8-dihydroguanine DNA N-glycosylase activity"/>
    <property type="evidence" value="ECO:0007669"/>
    <property type="project" value="TreeGrafter"/>
</dbReference>
<dbReference type="GO" id="GO:0140078">
    <property type="term" value="F:class I DNA-(apurinic or apyrimidinic site) endonuclease activity"/>
    <property type="evidence" value="ECO:0007669"/>
    <property type="project" value="UniProtKB-EC"/>
</dbReference>
<dbReference type="GO" id="GO:0003684">
    <property type="term" value="F:damaged DNA binding"/>
    <property type="evidence" value="ECO:0007669"/>
    <property type="project" value="InterPro"/>
</dbReference>
<dbReference type="GO" id="GO:0008270">
    <property type="term" value="F:zinc ion binding"/>
    <property type="evidence" value="ECO:0007669"/>
    <property type="project" value="UniProtKB-UniRule"/>
</dbReference>
<dbReference type="GO" id="GO:0006284">
    <property type="term" value="P:base-excision repair"/>
    <property type="evidence" value="ECO:0007669"/>
    <property type="project" value="InterPro"/>
</dbReference>
<dbReference type="CDD" id="cd08966">
    <property type="entry name" value="EcFpg-like_N"/>
    <property type="match status" value="1"/>
</dbReference>
<dbReference type="FunFam" id="1.10.8.50:FF:000003">
    <property type="entry name" value="Formamidopyrimidine-DNA glycosylase"/>
    <property type="match status" value="1"/>
</dbReference>
<dbReference type="FunFam" id="3.20.190.10:FF:000001">
    <property type="entry name" value="Formamidopyrimidine-DNA glycosylase"/>
    <property type="match status" value="1"/>
</dbReference>
<dbReference type="Gene3D" id="1.10.8.50">
    <property type="match status" value="1"/>
</dbReference>
<dbReference type="Gene3D" id="3.20.190.10">
    <property type="entry name" value="MutM-like, N-terminal"/>
    <property type="match status" value="1"/>
</dbReference>
<dbReference type="HAMAP" id="MF_00103">
    <property type="entry name" value="Fapy_DNA_glycosyl"/>
    <property type="match status" value="1"/>
</dbReference>
<dbReference type="InterPro" id="IPR015886">
    <property type="entry name" value="DNA_glyclase/AP_lyase_DNA-bd"/>
</dbReference>
<dbReference type="InterPro" id="IPR015887">
    <property type="entry name" value="DNA_glyclase_Znf_dom_DNA_BS"/>
</dbReference>
<dbReference type="InterPro" id="IPR020629">
    <property type="entry name" value="Formamido-pyr_DNA_Glyclase"/>
</dbReference>
<dbReference type="InterPro" id="IPR012319">
    <property type="entry name" value="FPG_cat"/>
</dbReference>
<dbReference type="InterPro" id="IPR035937">
    <property type="entry name" value="MutM-like_N-ter"/>
</dbReference>
<dbReference type="InterPro" id="IPR010979">
    <property type="entry name" value="Ribosomal_uS13-like_H2TH"/>
</dbReference>
<dbReference type="InterPro" id="IPR000214">
    <property type="entry name" value="Znf_DNA_glyclase/AP_lyase"/>
</dbReference>
<dbReference type="InterPro" id="IPR010663">
    <property type="entry name" value="Znf_FPG/IleRS"/>
</dbReference>
<dbReference type="NCBIfam" id="TIGR00577">
    <property type="entry name" value="fpg"/>
    <property type="match status" value="1"/>
</dbReference>
<dbReference type="NCBIfam" id="NF002211">
    <property type="entry name" value="PRK01103.1"/>
    <property type="match status" value="1"/>
</dbReference>
<dbReference type="PANTHER" id="PTHR22993">
    <property type="entry name" value="FORMAMIDOPYRIMIDINE-DNA GLYCOSYLASE"/>
    <property type="match status" value="1"/>
</dbReference>
<dbReference type="PANTHER" id="PTHR22993:SF9">
    <property type="entry name" value="FORMAMIDOPYRIMIDINE-DNA GLYCOSYLASE"/>
    <property type="match status" value="1"/>
</dbReference>
<dbReference type="Pfam" id="PF01149">
    <property type="entry name" value="Fapy_DNA_glyco"/>
    <property type="match status" value="1"/>
</dbReference>
<dbReference type="Pfam" id="PF06831">
    <property type="entry name" value="H2TH"/>
    <property type="match status" value="1"/>
</dbReference>
<dbReference type="Pfam" id="PF06827">
    <property type="entry name" value="zf-FPG_IleRS"/>
    <property type="match status" value="1"/>
</dbReference>
<dbReference type="SMART" id="SM00898">
    <property type="entry name" value="Fapy_DNA_glyco"/>
    <property type="match status" value="1"/>
</dbReference>
<dbReference type="SMART" id="SM01232">
    <property type="entry name" value="H2TH"/>
    <property type="match status" value="1"/>
</dbReference>
<dbReference type="SUPFAM" id="SSF57716">
    <property type="entry name" value="Glucocorticoid receptor-like (DNA-binding domain)"/>
    <property type="match status" value="1"/>
</dbReference>
<dbReference type="SUPFAM" id="SSF81624">
    <property type="entry name" value="N-terminal domain of MutM-like DNA repair proteins"/>
    <property type="match status" value="1"/>
</dbReference>
<dbReference type="SUPFAM" id="SSF46946">
    <property type="entry name" value="S13-like H2TH domain"/>
    <property type="match status" value="1"/>
</dbReference>
<dbReference type="PROSITE" id="PS51068">
    <property type="entry name" value="FPG_CAT"/>
    <property type="match status" value="1"/>
</dbReference>
<dbReference type="PROSITE" id="PS01242">
    <property type="entry name" value="ZF_FPG_1"/>
    <property type="match status" value="1"/>
</dbReference>
<dbReference type="PROSITE" id="PS51066">
    <property type="entry name" value="ZF_FPG_2"/>
    <property type="match status" value="1"/>
</dbReference>
<evidence type="ECO:0000250" key="1"/>
<evidence type="ECO:0000305" key="2"/>
<accession>P57910</accession>
<sequence length="270" mass="30612">MPELPEVETTKNGISPYLEGAIIEKIVVRQPKLRWMVSEELAQITQQKVIALSRRAKYLIIQLETGYMIGHLGMSGSLRVVEKGDLIDKHDHLDIVVNNGKVVRYNDPRRFGAWLWTEKLDEFPLFLKLGPEPLSEEFDSDYLWQKSRKKQTALKTFLMDNAVVVGVGNIYANETLFLCNLHPQKTAGSLTKAQCGQLVEQIKQVLSNAIQQGGTTLKDFLQPDGRPGYFVQELRVYGNKDKPCPTCGTKIESLVIGQRNSFYCPKCQKR</sequence>
<name>FPG_PASMU</name>
<protein>
    <recommendedName>
        <fullName>Formamidopyrimidine-DNA glycosylase</fullName>
        <shortName>Fapy-DNA glycosylase</shortName>
        <ecNumber>3.2.2.23</ecNumber>
    </recommendedName>
    <alternativeName>
        <fullName>DNA-(apurinic or apyrimidinic site) lyase MutM</fullName>
        <shortName>AP lyase MutM</shortName>
        <ecNumber>4.2.99.18</ecNumber>
    </alternativeName>
</protein>
<gene>
    <name type="primary">mutM</name>
    <name type="synonym">fpg</name>
    <name type="ordered locus">PM1145</name>
</gene>
<reference key="1">
    <citation type="journal article" date="2001" name="Proc. Natl. Acad. Sci. U.S.A.">
        <title>Complete genomic sequence of Pasteurella multocida Pm70.</title>
        <authorList>
            <person name="May B.J."/>
            <person name="Zhang Q."/>
            <person name="Li L.L."/>
            <person name="Paustian M.L."/>
            <person name="Whittam T.S."/>
            <person name="Kapur V."/>
        </authorList>
    </citation>
    <scope>NUCLEOTIDE SEQUENCE [LARGE SCALE GENOMIC DNA]</scope>
    <source>
        <strain>Pm70</strain>
    </source>
</reference>
<comment type="function">
    <text evidence="1">Involved in base excision repair of DNA damaged by oxidation or by mutagenic agents. Acts as a DNA glycosylase that recognizes and removes damaged bases. Has a preference for oxidized purines, such as 7,8-dihydro-8-oxoguanine (8-oxoG). Has AP (apurinic/apyrimidinic) lyase activity and introduces nicks in the DNA strand. Cleaves the DNA backbone by beta-delta elimination to generate a single-strand break at the site of the removed base with both 3'- and 5'-phosphates (By similarity).</text>
</comment>
<comment type="catalytic activity">
    <reaction>
        <text>Hydrolysis of DNA containing ring-opened 7-methylguanine residues, releasing 2,6-diamino-4-hydroxy-5-(N-methyl)formamidopyrimidine.</text>
        <dbReference type="EC" id="3.2.2.23"/>
    </reaction>
</comment>
<comment type="catalytic activity">
    <reaction>
        <text>2'-deoxyribonucleotide-(2'-deoxyribose 5'-phosphate)-2'-deoxyribonucleotide-DNA = a 3'-end 2'-deoxyribonucleotide-(2,3-dehydro-2,3-deoxyribose 5'-phosphate)-DNA + a 5'-end 5'-phospho-2'-deoxyribonucleoside-DNA + H(+)</text>
        <dbReference type="Rhea" id="RHEA:66592"/>
        <dbReference type="Rhea" id="RHEA-COMP:13180"/>
        <dbReference type="Rhea" id="RHEA-COMP:16897"/>
        <dbReference type="Rhea" id="RHEA-COMP:17067"/>
        <dbReference type="ChEBI" id="CHEBI:15378"/>
        <dbReference type="ChEBI" id="CHEBI:136412"/>
        <dbReference type="ChEBI" id="CHEBI:157695"/>
        <dbReference type="ChEBI" id="CHEBI:167181"/>
        <dbReference type="EC" id="4.2.99.18"/>
    </reaction>
</comment>
<comment type="cofactor">
    <cofactor evidence="1">
        <name>Zn(2+)</name>
        <dbReference type="ChEBI" id="CHEBI:29105"/>
    </cofactor>
    <text evidence="1">Binds 1 zinc ion per subunit.</text>
</comment>
<comment type="subunit">
    <text evidence="1">Monomer.</text>
</comment>
<comment type="similarity">
    <text evidence="2">Belongs to the FPG family.</text>
</comment>
<organism>
    <name type="scientific">Pasteurella multocida (strain Pm70)</name>
    <dbReference type="NCBI Taxonomy" id="272843"/>
    <lineage>
        <taxon>Bacteria</taxon>
        <taxon>Pseudomonadati</taxon>
        <taxon>Pseudomonadota</taxon>
        <taxon>Gammaproteobacteria</taxon>
        <taxon>Pasteurellales</taxon>
        <taxon>Pasteurellaceae</taxon>
        <taxon>Pasteurella</taxon>
    </lineage>
</organism>
<feature type="initiator methionine" description="Removed" evidence="1">
    <location>
        <position position="1"/>
    </location>
</feature>
<feature type="chain" id="PRO_0000170846" description="Formamidopyrimidine-DNA glycosylase">
    <location>
        <begin position="2"/>
        <end position="270"/>
    </location>
</feature>
<feature type="zinc finger region" description="FPG-type">
    <location>
        <begin position="235"/>
        <end position="269"/>
    </location>
</feature>
<feature type="active site" description="Schiff-base intermediate with DNA" evidence="1">
    <location>
        <position position="2"/>
    </location>
</feature>
<feature type="active site" description="Proton donor" evidence="1">
    <location>
        <position position="3"/>
    </location>
</feature>
<feature type="active site" description="Proton donor; for beta-elimination activity" evidence="1">
    <location>
        <position position="57"/>
    </location>
</feature>
<feature type="active site" description="Proton donor; for delta-elimination activity" evidence="1">
    <location>
        <position position="259"/>
    </location>
</feature>
<feature type="binding site" evidence="1">
    <location>
        <position position="90"/>
    </location>
    <ligand>
        <name>DNA</name>
        <dbReference type="ChEBI" id="CHEBI:16991"/>
    </ligand>
</feature>
<feature type="binding site" evidence="1">
    <location>
        <position position="109"/>
    </location>
    <ligand>
        <name>DNA</name>
        <dbReference type="ChEBI" id="CHEBI:16991"/>
    </ligand>
</feature>
<feature type="binding site" evidence="1">
    <location>
        <position position="150"/>
    </location>
    <ligand>
        <name>DNA</name>
        <dbReference type="ChEBI" id="CHEBI:16991"/>
    </ligand>
</feature>
<keyword id="KW-0227">DNA damage</keyword>
<keyword id="KW-0234">DNA repair</keyword>
<keyword id="KW-0238">DNA-binding</keyword>
<keyword id="KW-0326">Glycosidase</keyword>
<keyword id="KW-0378">Hydrolase</keyword>
<keyword id="KW-0456">Lyase</keyword>
<keyword id="KW-0479">Metal-binding</keyword>
<keyword id="KW-0511">Multifunctional enzyme</keyword>
<keyword id="KW-1185">Reference proteome</keyword>
<keyword id="KW-0862">Zinc</keyword>
<keyword id="KW-0863">Zinc-finger</keyword>
<proteinExistence type="inferred from homology"/>